<comment type="function">
    <text evidence="1">Channel that opens in response to stretch forces in the membrane lipid bilayer. May participate in the regulation of osmotic pressure changes within the cell.</text>
</comment>
<comment type="subunit">
    <text evidence="1">Homopentamer.</text>
</comment>
<comment type="subcellular location">
    <subcellularLocation>
        <location evidence="1">Cell membrane</location>
        <topology evidence="1">Multi-pass membrane protein</topology>
    </subcellularLocation>
</comment>
<comment type="similarity">
    <text evidence="1">Belongs to the MscL family.</text>
</comment>
<sequence>MWNEFKKFAFKGNVIDLAVGVVIGAAFGKIVSSLVKDIITPLLGMVLGGVDFTDLKITFGKSSIMYGNFIQTIFDFLIIAAAIFMFVKVFNKLTSKREEEKEEEIPEPTKEEELLGEIRDLLKQQNSSKDRA</sequence>
<evidence type="ECO:0000255" key="1">
    <source>
        <dbReference type="HAMAP-Rule" id="MF_00115"/>
    </source>
</evidence>
<proteinExistence type="inferred from homology"/>
<feature type="chain" id="PRO_1000191350" description="Large-conductance mechanosensitive channel">
    <location>
        <begin position="1"/>
        <end position="132"/>
    </location>
</feature>
<feature type="transmembrane region" description="Helical" evidence="1">
    <location>
        <begin position="14"/>
        <end position="34"/>
    </location>
</feature>
<feature type="transmembrane region" description="Helical" evidence="1">
    <location>
        <begin position="67"/>
        <end position="87"/>
    </location>
</feature>
<protein>
    <recommendedName>
        <fullName evidence="1">Large-conductance mechanosensitive channel</fullName>
    </recommendedName>
</protein>
<gene>
    <name evidence="1" type="primary">mscL</name>
    <name type="ordered locus">BAMEG_4956</name>
</gene>
<reference key="1">
    <citation type="submission" date="2008-10" db="EMBL/GenBank/DDBJ databases">
        <title>Genome sequence of Bacillus anthracis str. CDC 684.</title>
        <authorList>
            <person name="Dodson R.J."/>
            <person name="Munk A.C."/>
            <person name="Brettin T."/>
            <person name="Bruce D."/>
            <person name="Detter C."/>
            <person name="Tapia R."/>
            <person name="Han C."/>
            <person name="Sutton G."/>
            <person name="Sims D."/>
        </authorList>
    </citation>
    <scope>NUCLEOTIDE SEQUENCE [LARGE SCALE GENOMIC DNA]</scope>
    <source>
        <strain>CDC 684 / NRRL 3495</strain>
    </source>
</reference>
<name>MSCL_BACAC</name>
<organism>
    <name type="scientific">Bacillus anthracis (strain CDC 684 / NRRL 3495)</name>
    <dbReference type="NCBI Taxonomy" id="568206"/>
    <lineage>
        <taxon>Bacteria</taxon>
        <taxon>Bacillati</taxon>
        <taxon>Bacillota</taxon>
        <taxon>Bacilli</taxon>
        <taxon>Bacillales</taxon>
        <taxon>Bacillaceae</taxon>
        <taxon>Bacillus</taxon>
        <taxon>Bacillus cereus group</taxon>
    </lineage>
</organism>
<keyword id="KW-1003">Cell membrane</keyword>
<keyword id="KW-0407">Ion channel</keyword>
<keyword id="KW-0406">Ion transport</keyword>
<keyword id="KW-0472">Membrane</keyword>
<keyword id="KW-0812">Transmembrane</keyword>
<keyword id="KW-1133">Transmembrane helix</keyword>
<keyword id="KW-0813">Transport</keyword>
<accession>C3L9Y0</accession>
<dbReference type="EMBL" id="CP001215">
    <property type="protein sequence ID" value="ACP17262.1"/>
    <property type="molecule type" value="Genomic_DNA"/>
</dbReference>
<dbReference type="RefSeq" id="WP_000267001.1">
    <property type="nucleotide sequence ID" value="NC_012581.1"/>
</dbReference>
<dbReference type="SMR" id="C3L9Y0"/>
<dbReference type="GeneID" id="45024544"/>
<dbReference type="KEGG" id="bah:BAMEG_4956"/>
<dbReference type="HOGENOM" id="CLU_095787_0_0_9"/>
<dbReference type="GO" id="GO:0005886">
    <property type="term" value="C:plasma membrane"/>
    <property type="evidence" value="ECO:0007669"/>
    <property type="project" value="UniProtKB-SubCell"/>
</dbReference>
<dbReference type="GO" id="GO:0008381">
    <property type="term" value="F:mechanosensitive monoatomic ion channel activity"/>
    <property type="evidence" value="ECO:0007669"/>
    <property type="project" value="UniProtKB-UniRule"/>
</dbReference>
<dbReference type="FunFam" id="1.10.1200.120:FF:000001">
    <property type="entry name" value="Large-conductance mechanosensitive channel"/>
    <property type="match status" value="1"/>
</dbReference>
<dbReference type="Gene3D" id="1.10.1200.120">
    <property type="entry name" value="Large-conductance mechanosensitive channel, MscL, domain 1"/>
    <property type="match status" value="1"/>
</dbReference>
<dbReference type="HAMAP" id="MF_00115">
    <property type="entry name" value="MscL"/>
    <property type="match status" value="1"/>
</dbReference>
<dbReference type="InterPro" id="IPR019823">
    <property type="entry name" value="Mechanosensitive_channel_CS"/>
</dbReference>
<dbReference type="InterPro" id="IPR001185">
    <property type="entry name" value="MS_channel"/>
</dbReference>
<dbReference type="InterPro" id="IPR037673">
    <property type="entry name" value="MSC/AndL"/>
</dbReference>
<dbReference type="InterPro" id="IPR036019">
    <property type="entry name" value="MscL_channel"/>
</dbReference>
<dbReference type="NCBIfam" id="TIGR00220">
    <property type="entry name" value="mscL"/>
    <property type="match status" value="1"/>
</dbReference>
<dbReference type="NCBIfam" id="NF001843">
    <property type="entry name" value="PRK00567.1-4"/>
    <property type="match status" value="1"/>
</dbReference>
<dbReference type="NCBIfam" id="NF010560">
    <property type="entry name" value="PRK13955.1"/>
    <property type="match status" value="1"/>
</dbReference>
<dbReference type="PANTHER" id="PTHR30266:SF2">
    <property type="entry name" value="LARGE-CONDUCTANCE MECHANOSENSITIVE CHANNEL"/>
    <property type="match status" value="1"/>
</dbReference>
<dbReference type="PANTHER" id="PTHR30266">
    <property type="entry name" value="MECHANOSENSITIVE CHANNEL MSCL"/>
    <property type="match status" value="1"/>
</dbReference>
<dbReference type="Pfam" id="PF01741">
    <property type="entry name" value="MscL"/>
    <property type="match status" value="1"/>
</dbReference>
<dbReference type="PRINTS" id="PR01264">
    <property type="entry name" value="MECHCHANNEL"/>
</dbReference>
<dbReference type="SUPFAM" id="SSF81330">
    <property type="entry name" value="Gated mechanosensitive channel"/>
    <property type="match status" value="1"/>
</dbReference>
<dbReference type="PROSITE" id="PS01327">
    <property type="entry name" value="MSCL"/>
    <property type="match status" value="1"/>
</dbReference>